<sequence>MTENRYELNKNLAQMLKGGVIMDVQNPEQARIAEAAGAAAVMALERIPADIRAAGGVSRMSDPKMIKEIQEAVSIPVMAKVRIGHFVEAQILEAIEIDYIDESEVLSPADDRFHVDKKEFQVPFVCGAKDLGEALRRIAEGASMIRTKGEPGTGDIVQAVRHMRMMNQEIRRIQNLREDELYVAAKDLQVPVELVQYVHEHGKLPVVNFAAGGVATPADAALMMQLGAEGVFVGSGIFKSGDPVKRASAIVKAVTNFRNPQILAQISEDLGEAMVGINENEIQILMAERGK</sequence>
<comment type="function">
    <text evidence="1">Catalyzes the formation of pyridoxal 5'-phosphate from ribose 5-phosphate (RBP), glyceraldehyde 3-phosphate (G3P) and ammonia. The ammonia is provided by the PdxT subunit. Can also use ribulose 5-phosphate and dihydroxyacetone phosphate as substrates, resulting from enzyme-catalyzed isomerization of RBP and G3P, respectively.</text>
</comment>
<comment type="catalytic activity">
    <reaction evidence="1">
        <text>aldehydo-D-ribose 5-phosphate + D-glyceraldehyde 3-phosphate + L-glutamine = pyridoxal 5'-phosphate + L-glutamate + phosphate + 3 H2O + H(+)</text>
        <dbReference type="Rhea" id="RHEA:31507"/>
        <dbReference type="ChEBI" id="CHEBI:15377"/>
        <dbReference type="ChEBI" id="CHEBI:15378"/>
        <dbReference type="ChEBI" id="CHEBI:29985"/>
        <dbReference type="ChEBI" id="CHEBI:43474"/>
        <dbReference type="ChEBI" id="CHEBI:58273"/>
        <dbReference type="ChEBI" id="CHEBI:58359"/>
        <dbReference type="ChEBI" id="CHEBI:59776"/>
        <dbReference type="ChEBI" id="CHEBI:597326"/>
        <dbReference type="EC" id="4.3.3.6"/>
    </reaction>
</comment>
<comment type="pathway">
    <text evidence="1">Cofactor biosynthesis; pyridoxal 5'-phosphate biosynthesis.</text>
</comment>
<comment type="subunit">
    <text evidence="1">In the presence of PdxT, forms a dodecamer of heterodimers.</text>
</comment>
<comment type="similarity">
    <text evidence="1">Belongs to the PdxS/SNZ family.</text>
</comment>
<dbReference type="EC" id="4.3.3.6" evidence="1"/>
<dbReference type="EMBL" id="CP000919">
    <property type="protein sequence ID" value="ACO19269.1"/>
    <property type="molecule type" value="Genomic_DNA"/>
</dbReference>
<dbReference type="RefSeq" id="WP_000138517.1">
    <property type="nucleotide sequence ID" value="NC_012466.1"/>
</dbReference>
<dbReference type="SMR" id="C1CF50"/>
<dbReference type="GeneID" id="45653282"/>
<dbReference type="KEGG" id="sjj:SPJ_1367"/>
<dbReference type="HOGENOM" id="CLU_055352_1_0_9"/>
<dbReference type="UniPathway" id="UPA00245"/>
<dbReference type="Proteomes" id="UP000002206">
    <property type="component" value="Chromosome"/>
</dbReference>
<dbReference type="GO" id="GO:0036381">
    <property type="term" value="F:pyridoxal 5'-phosphate synthase (glutamine hydrolysing) activity"/>
    <property type="evidence" value="ECO:0007669"/>
    <property type="project" value="UniProtKB-UniRule"/>
</dbReference>
<dbReference type="GO" id="GO:0006520">
    <property type="term" value="P:amino acid metabolic process"/>
    <property type="evidence" value="ECO:0007669"/>
    <property type="project" value="TreeGrafter"/>
</dbReference>
<dbReference type="GO" id="GO:0042823">
    <property type="term" value="P:pyridoxal phosphate biosynthetic process"/>
    <property type="evidence" value="ECO:0007669"/>
    <property type="project" value="UniProtKB-UniRule"/>
</dbReference>
<dbReference type="GO" id="GO:0008615">
    <property type="term" value="P:pyridoxine biosynthetic process"/>
    <property type="evidence" value="ECO:0007669"/>
    <property type="project" value="TreeGrafter"/>
</dbReference>
<dbReference type="CDD" id="cd04727">
    <property type="entry name" value="pdxS"/>
    <property type="match status" value="1"/>
</dbReference>
<dbReference type="FunFam" id="3.20.20.70:FF:000001">
    <property type="entry name" value="Pyridoxine biosynthesis protein PDX1"/>
    <property type="match status" value="1"/>
</dbReference>
<dbReference type="Gene3D" id="3.20.20.70">
    <property type="entry name" value="Aldolase class I"/>
    <property type="match status" value="1"/>
</dbReference>
<dbReference type="HAMAP" id="MF_01824">
    <property type="entry name" value="PdxS"/>
    <property type="match status" value="1"/>
</dbReference>
<dbReference type="InterPro" id="IPR013785">
    <property type="entry name" value="Aldolase_TIM"/>
</dbReference>
<dbReference type="InterPro" id="IPR001852">
    <property type="entry name" value="PdxS/SNZ"/>
</dbReference>
<dbReference type="InterPro" id="IPR033755">
    <property type="entry name" value="PdxS/SNZ_N"/>
</dbReference>
<dbReference type="InterPro" id="IPR011060">
    <property type="entry name" value="RibuloseP-bd_barrel"/>
</dbReference>
<dbReference type="NCBIfam" id="NF003215">
    <property type="entry name" value="PRK04180.1"/>
    <property type="match status" value="1"/>
</dbReference>
<dbReference type="NCBIfam" id="TIGR00343">
    <property type="entry name" value="pyridoxal 5'-phosphate synthase lyase subunit PdxS"/>
    <property type="match status" value="1"/>
</dbReference>
<dbReference type="PANTHER" id="PTHR31829">
    <property type="entry name" value="PYRIDOXAL 5'-PHOSPHATE SYNTHASE SUBUNIT SNZ1-RELATED"/>
    <property type="match status" value="1"/>
</dbReference>
<dbReference type="PANTHER" id="PTHR31829:SF0">
    <property type="entry name" value="PYRIDOXAL 5'-PHOSPHATE SYNTHASE SUBUNIT SNZ1-RELATED"/>
    <property type="match status" value="1"/>
</dbReference>
<dbReference type="Pfam" id="PF01680">
    <property type="entry name" value="SOR_SNZ"/>
    <property type="match status" value="1"/>
</dbReference>
<dbReference type="PIRSF" id="PIRSF029271">
    <property type="entry name" value="Pdx1"/>
    <property type="match status" value="1"/>
</dbReference>
<dbReference type="SUPFAM" id="SSF51366">
    <property type="entry name" value="Ribulose-phoshate binding barrel"/>
    <property type="match status" value="1"/>
</dbReference>
<dbReference type="PROSITE" id="PS01235">
    <property type="entry name" value="PDXS_SNZ_1"/>
    <property type="match status" value="1"/>
</dbReference>
<dbReference type="PROSITE" id="PS51129">
    <property type="entry name" value="PDXS_SNZ_2"/>
    <property type="match status" value="1"/>
</dbReference>
<keyword id="KW-0456">Lyase</keyword>
<keyword id="KW-0663">Pyridoxal phosphate</keyword>
<keyword id="KW-0704">Schiff base</keyword>
<evidence type="ECO:0000255" key="1">
    <source>
        <dbReference type="HAMAP-Rule" id="MF_01824"/>
    </source>
</evidence>
<name>PDXS_STRZJ</name>
<gene>
    <name evidence="1" type="primary">pdxS</name>
    <name type="ordered locus">SPJ_1367</name>
</gene>
<feature type="chain" id="PRO_1000188244" description="Pyridoxal 5'-phosphate synthase subunit PdxS">
    <location>
        <begin position="1"/>
        <end position="291"/>
    </location>
</feature>
<feature type="active site" description="Schiff-base intermediate with D-ribose 5-phosphate" evidence="1">
    <location>
        <position position="80"/>
    </location>
</feature>
<feature type="binding site" evidence="1">
    <location>
        <position position="23"/>
    </location>
    <ligand>
        <name>D-ribose 5-phosphate</name>
        <dbReference type="ChEBI" id="CHEBI:78346"/>
    </ligand>
</feature>
<feature type="binding site" evidence="1">
    <location>
        <position position="152"/>
    </location>
    <ligand>
        <name>D-ribose 5-phosphate</name>
        <dbReference type="ChEBI" id="CHEBI:78346"/>
    </ligand>
</feature>
<feature type="binding site" evidence="1">
    <location>
        <position position="164"/>
    </location>
    <ligand>
        <name>D-glyceraldehyde 3-phosphate</name>
        <dbReference type="ChEBI" id="CHEBI:59776"/>
    </ligand>
</feature>
<feature type="binding site" evidence="1">
    <location>
        <position position="213"/>
    </location>
    <ligand>
        <name>D-ribose 5-phosphate</name>
        <dbReference type="ChEBI" id="CHEBI:78346"/>
    </ligand>
</feature>
<feature type="binding site" evidence="1">
    <location>
        <begin position="234"/>
        <end position="235"/>
    </location>
    <ligand>
        <name>D-ribose 5-phosphate</name>
        <dbReference type="ChEBI" id="CHEBI:78346"/>
    </ligand>
</feature>
<organism>
    <name type="scientific">Streptococcus pneumoniae (strain JJA)</name>
    <dbReference type="NCBI Taxonomy" id="488222"/>
    <lineage>
        <taxon>Bacteria</taxon>
        <taxon>Bacillati</taxon>
        <taxon>Bacillota</taxon>
        <taxon>Bacilli</taxon>
        <taxon>Lactobacillales</taxon>
        <taxon>Streptococcaceae</taxon>
        <taxon>Streptococcus</taxon>
    </lineage>
</organism>
<accession>C1CF50</accession>
<reference key="1">
    <citation type="journal article" date="2010" name="Genome Biol.">
        <title>Structure and dynamics of the pan-genome of Streptococcus pneumoniae and closely related species.</title>
        <authorList>
            <person name="Donati C."/>
            <person name="Hiller N.L."/>
            <person name="Tettelin H."/>
            <person name="Muzzi A."/>
            <person name="Croucher N.J."/>
            <person name="Angiuoli S.V."/>
            <person name="Oggioni M."/>
            <person name="Dunning Hotopp J.C."/>
            <person name="Hu F.Z."/>
            <person name="Riley D.R."/>
            <person name="Covacci A."/>
            <person name="Mitchell T.J."/>
            <person name="Bentley S.D."/>
            <person name="Kilian M."/>
            <person name="Ehrlich G.D."/>
            <person name="Rappuoli R."/>
            <person name="Moxon E.R."/>
            <person name="Masignani V."/>
        </authorList>
    </citation>
    <scope>NUCLEOTIDE SEQUENCE [LARGE SCALE GENOMIC DNA]</scope>
    <source>
        <strain>JJA</strain>
    </source>
</reference>
<proteinExistence type="inferred from homology"/>
<protein>
    <recommendedName>
        <fullName evidence="1">Pyridoxal 5'-phosphate synthase subunit PdxS</fullName>
        <shortName evidence="1">PLP synthase subunit PdxS</shortName>
        <ecNumber evidence="1">4.3.3.6</ecNumber>
    </recommendedName>
    <alternativeName>
        <fullName evidence="1">Pdx1</fullName>
    </alternativeName>
</protein>